<feature type="signal peptide" description="Tat-type signal" evidence="1">
    <location>
        <begin position="1"/>
        <end position="31"/>
    </location>
</feature>
<feature type="chain" id="PRO_1000069718" description="Periplasmic nitrate reductase" evidence="1">
    <location>
        <begin position="32"/>
        <end position="828"/>
    </location>
</feature>
<feature type="domain" description="4Fe-4S Mo/W bis-MGD-type" evidence="1">
    <location>
        <begin position="39"/>
        <end position="95"/>
    </location>
</feature>
<feature type="binding site" evidence="1">
    <location>
        <position position="46"/>
    </location>
    <ligand>
        <name>[4Fe-4S] cluster</name>
        <dbReference type="ChEBI" id="CHEBI:49883"/>
    </ligand>
</feature>
<feature type="binding site" evidence="1">
    <location>
        <position position="49"/>
    </location>
    <ligand>
        <name>[4Fe-4S] cluster</name>
        <dbReference type="ChEBI" id="CHEBI:49883"/>
    </ligand>
</feature>
<feature type="binding site" evidence="1">
    <location>
        <position position="53"/>
    </location>
    <ligand>
        <name>[4Fe-4S] cluster</name>
        <dbReference type="ChEBI" id="CHEBI:49883"/>
    </ligand>
</feature>
<feature type="binding site" evidence="1">
    <location>
        <position position="81"/>
    </location>
    <ligand>
        <name>[4Fe-4S] cluster</name>
        <dbReference type="ChEBI" id="CHEBI:49883"/>
    </ligand>
</feature>
<feature type="binding site" evidence="1">
    <location>
        <position position="83"/>
    </location>
    <ligand>
        <name>Mo-bis(molybdopterin guanine dinucleotide)</name>
        <dbReference type="ChEBI" id="CHEBI:60539"/>
    </ligand>
</feature>
<feature type="binding site" evidence="1">
    <location>
        <position position="150"/>
    </location>
    <ligand>
        <name>Mo-bis(molybdopterin guanine dinucleotide)</name>
        <dbReference type="ChEBI" id="CHEBI:60539"/>
    </ligand>
</feature>
<feature type="binding site" evidence="1">
    <location>
        <position position="175"/>
    </location>
    <ligand>
        <name>Mo-bis(molybdopterin guanine dinucleotide)</name>
        <dbReference type="ChEBI" id="CHEBI:60539"/>
    </ligand>
</feature>
<feature type="binding site" evidence="1">
    <location>
        <position position="179"/>
    </location>
    <ligand>
        <name>Mo-bis(molybdopterin guanine dinucleotide)</name>
        <dbReference type="ChEBI" id="CHEBI:60539"/>
    </ligand>
</feature>
<feature type="binding site" evidence="1">
    <location>
        <begin position="212"/>
        <end position="219"/>
    </location>
    <ligand>
        <name>Mo-bis(molybdopterin guanine dinucleotide)</name>
        <dbReference type="ChEBI" id="CHEBI:60539"/>
    </ligand>
</feature>
<feature type="binding site" evidence="1">
    <location>
        <begin position="243"/>
        <end position="247"/>
    </location>
    <ligand>
        <name>Mo-bis(molybdopterin guanine dinucleotide)</name>
        <dbReference type="ChEBI" id="CHEBI:60539"/>
    </ligand>
</feature>
<feature type="binding site" evidence="1">
    <location>
        <begin position="262"/>
        <end position="264"/>
    </location>
    <ligand>
        <name>Mo-bis(molybdopterin guanine dinucleotide)</name>
        <dbReference type="ChEBI" id="CHEBI:60539"/>
    </ligand>
</feature>
<feature type="binding site" evidence="1">
    <location>
        <position position="372"/>
    </location>
    <ligand>
        <name>Mo-bis(molybdopterin guanine dinucleotide)</name>
        <dbReference type="ChEBI" id="CHEBI:60539"/>
    </ligand>
</feature>
<feature type="binding site" evidence="1">
    <location>
        <position position="376"/>
    </location>
    <ligand>
        <name>Mo-bis(molybdopterin guanine dinucleotide)</name>
        <dbReference type="ChEBI" id="CHEBI:60539"/>
    </ligand>
</feature>
<feature type="binding site" evidence="1">
    <location>
        <position position="482"/>
    </location>
    <ligand>
        <name>Mo-bis(molybdopterin guanine dinucleotide)</name>
        <dbReference type="ChEBI" id="CHEBI:60539"/>
    </ligand>
</feature>
<feature type="binding site" evidence="1">
    <location>
        <begin position="508"/>
        <end position="509"/>
    </location>
    <ligand>
        <name>Mo-bis(molybdopterin guanine dinucleotide)</name>
        <dbReference type="ChEBI" id="CHEBI:60539"/>
    </ligand>
</feature>
<feature type="binding site" evidence="1">
    <location>
        <position position="531"/>
    </location>
    <ligand>
        <name>Mo-bis(molybdopterin guanine dinucleotide)</name>
        <dbReference type="ChEBI" id="CHEBI:60539"/>
    </ligand>
</feature>
<feature type="binding site" evidence="1">
    <location>
        <position position="558"/>
    </location>
    <ligand>
        <name>Mo-bis(molybdopterin guanine dinucleotide)</name>
        <dbReference type="ChEBI" id="CHEBI:60539"/>
    </ligand>
</feature>
<feature type="binding site" evidence="1">
    <location>
        <begin position="718"/>
        <end position="727"/>
    </location>
    <ligand>
        <name>Mo-bis(molybdopterin guanine dinucleotide)</name>
        <dbReference type="ChEBI" id="CHEBI:60539"/>
    </ligand>
</feature>
<feature type="binding site" evidence="1">
    <location>
        <position position="794"/>
    </location>
    <ligand>
        <name>substrate</name>
    </ligand>
</feature>
<feature type="binding site" evidence="1">
    <location>
        <position position="802"/>
    </location>
    <ligand>
        <name>Mo-bis(molybdopterin guanine dinucleotide)</name>
        <dbReference type="ChEBI" id="CHEBI:60539"/>
    </ligand>
</feature>
<feature type="binding site" evidence="1">
    <location>
        <position position="819"/>
    </location>
    <ligand>
        <name>Mo-bis(molybdopterin guanine dinucleotide)</name>
        <dbReference type="ChEBI" id="CHEBI:60539"/>
    </ligand>
</feature>
<keyword id="KW-0004">4Fe-4S</keyword>
<keyword id="KW-0249">Electron transport</keyword>
<keyword id="KW-0408">Iron</keyword>
<keyword id="KW-0411">Iron-sulfur</keyword>
<keyword id="KW-0479">Metal-binding</keyword>
<keyword id="KW-0500">Molybdenum</keyword>
<keyword id="KW-0534">Nitrate assimilation</keyword>
<keyword id="KW-0560">Oxidoreductase</keyword>
<keyword id="KW-0574">Periplasm</keyword>
<keyword id="KW-1185">Reference proteome</keyword>
<keyword id="KW-0732">Signal</keyword>
<keyword id="KW-0813">Transport</keyword>
<protein>
    <recommendedName>
        <fullName evidence="1">Periplasmic nitrate reductase</fullName>
        <ecNumber evidence="1">1.9.6.1</ecNumber>
    </recommendedName>
</protein>
<name>NAPA_ECOK1</name>
<gene>
    <name evidence="1" type="primary">napA</name>
    <name type="ordered locus">Ecok1_21050</name>
    <name type="ORF">APECO1_4353</name>
</gene>
<reference key="1">
    <citation type="journal article" date="2007" name="J. Bacteriol.">
        <title>The genome sequence of avian pathogenic Escherichia coli strain O1:K1:H7 shares strong similarities with human extraintestinal pathogenic E. coli genomes.</title>
        <authorList>
            <person name="Johnson T.J."/>
            <person name="Kariyawasam S."/>
            <person name="Wannemuehler Y."/>
            <person name="Mangiamele P."/>
            <person name="Johnson S.J."/>
            <person name="Doetkott C."/>
            <person name="Skyberg J.A."/>
            <person name="Lynne A.M."/>
            <person name="Johnson J.R."/>
            <person name="Nolan L.K."/>
        </authorList>
    </citation>
    <scope>NUCLEOTIDE SEQUENCE [LARGE SCALE GENOMIC DNA]</scope>
</reference>
<sequence>MKLSRRSFMKANAVAAAAAAAGLSVPGVARAVVGQQEAIKWDKAPCRFCGTGCGVLVGTQQGRVVACQGDPDAPVNRGLNCIKGYFLPKIMYGKDRLTQPLLRMKNGKYDKEGEFTPITWDQAFDVMEDKFKTALKEKGPESIGMFGSGQWTIWEGYAASKLFKAGFRSNNIDPNARHCMASAVVGFMRTFGMDEPMGCYDDIEQADAFVLWGSNMAEMHPILWSRITNRRLSNQNVTVAVLSTYQHRSFELADNGIIFTPQSDLVILNYIANYIIQNNAINQDFFSKHVNLRKGATDIGYGLRPTHPLEKAAKNPGSDASEPMSFEDYKAFVAEYTLEKTAEMTGVPKDQLEQLAQLYADPNKKVISYWTMGFNQHTRGVWANNLVYNLHLLTGKISQPGCGPFSLTGQPSACGTAREVGTFAHRLPADMVVTNEKHRDICEKKWNIPSGTIPAKIGLHAVAQDRALKDGKLNVYWTMCTNNMQAGPNINEERMPGWRDPRNFIIVSDPYPTVSALAADLILPTAMWVEKEGAYGNAERRTQFWRQQVQAPGEAKSDLWQLVQFSRRFKTEEVWPEELLAKKPELRGKTLYEVLYATPEVSKFPVSELAEDQLNDESRELGFYLQKGLFEEYAWFGRGHGHDLAPFDDYHKARGLRWPVVNGKETQWRYSEGNDPYVKAGEGYKFYGKPDGKAVIFALPFEPAAEAPDEEYDLWLSTGRVLEHWHTGSMTRRVPELHRAFPEAVLFIHPLDAKARDLRRGDKVKVVSRRGEVISIVETRGRNRPPQGLVYMPFFDAAQLVNKLTLDATDPLSKETDFKKCAVKLEKV</sequence>
<evidence type="ECO:0000255" key="1">
    <source>
        <dbReference type="HAMAP-Rule" id="MF_01630"/>
    </source>
</evidence>
<organism>
    <name type="scientific">Escherichia coli O1:K1 / APEC</name>
    <dbReference type="NCBI Taxonomy" id="405955"/>
    <lineage>
        <taxon>Bacteria</taxon>
        <taxon>Pseudomonadati</taxon>
        <taxon>Pseudomonadota</taxon>
        <taxon>Gammaproteobacteria</taxon>
        <taxon>Enterobacterales</taxon>
        <taxon>Enterobacteriaceae</taxon>
        <taxon>Escherichia</taxon>
    </lineage>
</organism>
<proteinExistence type="inferred from homology"/>
<dbReference type="EC" id="1.9.6.1" evidence="1"/>
<dbReference type="EMBL" id="CP000468">
    <property type="protein sequence ID" value="ABJ01599.1"/>
    <property type="molecule type" value="Genomic_DNA"/>
</dbReference>
<dbReference type="RefSeq" id="WP_000778044.1">
    <property type="nucleotide sequence ID" value="NZ_CADILS010000004.1"/>
</dbReference>
<dbReference type="SMR" id="A1AD59"/>
<dbReference type="KEGG" id="ecv:APECO1_4353"/>
<dbReference type="HOGENOM" id="CLU_000422_13_4_6"/>
<dbReference type="Proteomes" id="UP000008216">
    <property type="component" value="Chromosome"/>
</dbReference>
<dbReference type="GO" id="GO:0016020">
    <property type="term" value="C:membrane"/>
    <property type="evidence" value="ECO:0007669"/>
    <property type="project" value="TreeGrafter"/>
</dbReference>
<dbReference type="GO" id="GO:0009325">
    <property type="term" value="C:nitrate reductase complex"/>
    <property type="evidence" value="ECO:0007669"/>
    <property type="project" value="TreeGrafter"/>
</dbReference>
<dbReference type="GO" id="GO:0042597">
    <property type="term" value="C:periplasmic space"/>
    <property type="evidence" value="ECO:0007669"/>
    <property type="project" value="UniProtKB-SubCell"/>
</dbReference>
<dbReference type="GO" id="GO:0051539">
    <property type="term" value="F:4 iron, 4 sulfur cluster binding"/>
    <property type="evidence" value="ECO:0007669"/>
    <property type="project" value="UniProtKB-KW"/>
</dbReference>
<dbReference type="GO" id="GO:0009055">
    <property type="term" value="F:electron transfer activity"/>
    <property type="evidence" value="ECO:0007669"/>
    <property type="project" value="UniProtKB-UniRule"/>
</dbReference>
<dbReference type="GO" id="GO:0005506">
    <property type="term" value="F:iron ion binding"/>
    <property type="evidence" value="ECO:0007669"/>
    <property type="project" value="UniProtKB-UniRule"/>
</dbReference>
<dbReference type="GO" id="GO:0030151">
    <property type="term" value="F:molybdenum ion binding"/>
    <property type="evidence" value="ECO:0007669"/>
    <property type="project" value="InterPro"/>
</dbReference>
<dbReference type="GO" id="GO:0043546">
    <property type="term" value="F:molybdopterin cofactor binding"/>
    <property type="evidence" value="ECO:0007669"/>
    <property type="project" value="InterPro"/>
</dbReference>
<dbReference type="GO" id="GO:0050140">
    <property type="term" value="F:nitrate reductase (cytochrome) activity"/>
    <property type="evidence" value="ECO:0007669"/>
    <property type="project" value="UniProtKB-EC"/>
</dbReference>
<dbReference type="GO" id="GO:0045333">
    <property type="term" value="P:cellular respiration"/>
    <property type="evidence" value="ECO:0007669"/>
    <property type="project" value="UniProtKB-ARBA"/>
</dbReference>
<dbReference type="GO" id="GO:0006777">
    <property type="term" value="P:Mo-molybdopterin cofactor biosynthetic process"/>
    <property type="evidence" value="ECO:0007669"/>
    <property type="project" value="UniProtKB-UniRule"/>
</dbReference>
<dbReference type="GO" id="GO:0042128">
    <property type="term" value="P:nitrate assimilation"/>
    <property type="evidence" value="ECO:0007669"/>
    <property type="project" value="UniProtKB-UniRule"/>
</dbReference>
<dbReference type="CDD" id="cd02791">
    <property type="entry name" value="MopB_CT_Nitrate-R-NapA-like"/>
    <property type="match status" value="1"/>
</dbReference>
<dbReference type="CDD" id="cd02754">
    <property type="entry name" value="MopB_Nitrate-R-NapA-like"/>
    <property type="match status" value="1"/>
</dbReference>
<dbReference type="FunFam" id="2.40.40.20:FF:000005">
    <property type="entry name" value="Periplasmic nitrate reductase"/>
    <property type="match status" value="1"/>
</dbReference>
<dbReference type="FunFam" id="3.40.228.10:FF:000001">
    <property type="entry name" value="Periplasmic nitrate reductase"/>
    <property type="match status" value="1"/>
</dbReference>
<dbReference type="Gene3D" id="2.40.40.20">
    <property type="match status" value="1"/>
</dbReference>
<dbReference type="Gene3D" id="3.30.200.210">
    <property type="match status" value="1"/>
</dbReference>
<dbReference type="Gene3D" id="3.40.50.740">
    <property type="match status" value="1"/>
</dbReference>
<dbReference type="Gene3D" id="3.40.228.10">
    <property type="entry name" value="Dimethylsulfoxide Reductase, domain 2"/>
    <property type="match status" value="1"/>
</dbReference>
<dbReference type="HAMAP" id="MF_01630">
    <property type="entry name" value="Nitrate_reduct_NapA"/>
    <property type="match status" value="1"/>
</dbReference>
<dbReference type="InterPro" id="IPR009010">
    <property type="entry name" value="Asp_de-COase-like_dom_sf"/>
</dbReference>
<dbReference type="InterPro" id="IPR041957">
    <property type="entry name" value="CT_Nitrate-R-NapA-like"/>
</dbReference>
<dbReference type="InterPro" id="IPR006657">
    <property type="entry name" value="MoPterin_dinucl-bd_dom"/>
</dbReference>
<dbReference type="InterPro" id="IPR006656">
    <property type="entry name" value="Mopterin_OxRdtase"/>
</dbReference>
<dbReference type="InterPro" id="IPR006963">
    <property type="entry name" value="Mopterin_OxRdtase_4Fe-4S_dom"/>
</dbReference>
<dbReference type="InterPro" id="IPR027467">
    <property type="entry name" value="MopterinOxRdtase_cofactor_BS"/>
</dbReference>
<dbReference type="InterPro" id="IPR010051">
    <property type="entry name" value="Periplasm_NO3_reductase_lsu"/>
</dbReference>
<dbReference type="InterPro" id="IPR050123">
    <property type="entry name" value="Prok_molybdopt-oxidoreductase"/>
</dbReference>
<dbReference type="InterPro" id="IPR006311">
    <property type="entry name" value="TAT_signal"/>
</dbReference>
<dbReference type="InterPro" id="IPR019546">
    <property type="entry name" value="TAT_signal_bac_arc"/>
</dbReference>
<dbReference type="NCBIfam" id="TIGR01706">
    <property type="entry name" value="NAPA"/>
    <property type="match status" value="1"/>
</dbReference>
<dbReference type="NCBIfam" id="NF010055">
    <property type="entry name" value="PRK13532.1"/>
    <property type="match status" value="1"/>
</dbReference>
<dbReference type="NCBIfam" id="TIGR01409">
    <property type="entry name" value="TAT_signal_seq"/>
    <property type="match status" value="1"/>
</dbReference>
<dbReference type="PANTHER" id="PTHR43105:SF11">
    <property type="entry name" value="PERIPLASMIC NITRATE REDUCTASE"/>
    <property type="match status" value="1"/>
</dbReference>
<dbReference type="PANTHER" id="PTHR43105">
    <property type="entry name" value="RESPIRATORY NITRATE REDUCTASE"/>
    <property type="match status" value="1"/>
</dbReference>
<dbReference type="Pfam" id="PF04879">
    <property type="entry name" value="Molybdop_Fe4S4"/>
    <property type="match status" value="1"/>
</dbReference>
<dbReference type="Pfam" id="PF00384">
    <property type="entry name" value="Molybdopterin"/>
    <property type="match status" value="1"/>
</dbReference>
<dbReference type="Pfam" id="PF01568">
    <property type="entry name" value="Molydop_binding"/>
    <property type="match status" value="1"/>
</dbReference>
<dbReference type="SMART" id="SM00926">
    <property type="entry name" value="Molybdop_Fe4S4"/>
    <property type="match status" value="1"/>
</dbReference>
<dbReference type="SUPFAM" id="SSF50692">
    <property type="entry name" value="ADC-like"/>
    <property type="match status" value="1"/>
</dbReference>
<dbReference type="SUPFAM" id="SSF53706">
    <property type="entry name" value="Formate dehydrogenase/DMSO reductase, domains 1-3"/>
    <property type="match status" value="1"/>
</dbReference>
<dbReference type="PROSITE" id="PS51669">
    <property type="entry name" value="4FE4S_MOW_BIS_MGD"/>
    <property type="match status" value="1"/>
</dbReference>
<dbReference type="PROSITE" id="PS00551">
    <property type="entry name" value="MOLYBDOPTERIN_PROK_1"/>
    <property type="match status" value="1"/>
</dbReference>
<dbReference type="PROSITE" id="PS51318">
    <property type="entry name" value="TAT"/>
    <property type="match status" value="1"/>
</dbReference>
<accession>A1AD59</accession>
<comment type="function">
    <text evidence="1">Catalytic subunit of the periplasmic nitrate reductase complex NapAB. Receives electrons from NapB and catalyzes the reduction of nitrate to nitrite.</text>
</comment>
<comment type="catalytic activity">
    <reaction evidence="1">
        <text>2 Fe(II)-[cytochrome] + nitrate + 2 H(+) = 2 Fe(III)-[cytochrome] + nitrite + H2O</text>
        <dbReference type="Rhea" id="RHEA:12909"/>
        <dbReference type="Rhea" id="RHEA-COMP:11777"/>
        <dbReference type="Rhea" id="RHEA-COMP:11778"/>
        <dbReference type="ChEBI" id="CHEBI:15377"/>
        <dbReference type="ChEBI" id="CHEBI:15378"/>
        <dbReference type="ChEBI" id="CHEBI:16301"/>
        <dbReference type="ChEBI" id="CHEBI:17632"/>
        <dbReference type="ChEBI" id="CHEBI:29033"/>
        <dbReference type="ChEBI" id="CHEBI:29034"/>
        <dbReference type="EC" id="1.9.6.1"/>
    </reaction>
</comment>
<comment type="cofactor">
    <cofactor evidence="1">
        <name>[4Fe-4S] cluster</name>
        <dbReference type="ChEBI" id="CHEBI:49883"/>
    </cofactor>
    <text evidence="1">Binds 1 [4Fe-4S] cluster.</text>
</comment>
<comment type="cofactor">
    <cofactor evidence="1">
        <name>Mo-bis(molybdopterin guanine dinucleotide)</name>
        <dbReference type="ChEBI" id="CHEBI:60539"/>
    </cofactor>
    <text evidence="1">Binds 1 molybdenum-bis(molybdopterin guanine dinucleotide) (Mo-bis-MGD) cofactor per subunit.</text>
</comment>
<comment type="subunit">
    <text evidence="1">Component of the periplasmic nitrate reductase NapAB complex composed of NapA and NapB.</text>
</comment>
<comment type="subcellular location">
    <subcellularLocation>
        <location evidence="1">Periplasm</location>
    </subcellularLocation>
</comment>
<comment type="PTM">
    <text evidence="1">Predicted to be exported by the Tat system. The position of the signal peptide cleavage has not been experimentally proven.</text>
</comment>
<comment type="similarity">
    <text evidence="1">Belongs to the prokaryotic molybdopterin-containing oxidoreductase family. NasA/NapA/NarB subfamily.</text>
</comment>